<accession>B3PYE2</accession>
<name>SYFA_RHIE6</name>
<protein>
    <recommendedName>
        <fullName evidence="1">Phenylalanine--tRNA ligase alpha subunit</fullName>
        <ecNumber evidence="1">6.1.1.20</ecNumber>
    </recommendedName>
    <alternativeName>
        <fullName evidence="1">Phenylalanyl-tRNA synthetase alpha subunit</fullName>
        <shortName evidence="1">PheRS</shortName>
    </alternativeName>
</protein>
<keyword id="KW-0030">Aminoacyl-tRNA synthetase</keyword>
<keyword id="KW-0067">ATP-binding</keyword>
<keyword id="KW-0963">Cytoplasm</keyword>
<keyword id="KW-0436">Ligase</keyword>
<keyword id="KW-0460">Magnesium</keyword>
<keyword id="KW-0479">Metal-binding</keyword>
<keyword id="KW-0547">Nucleotide-binding</keyword>
<keyword id="KW-0648">Protein biosynthesis</keyword>
<reference key="1">
    <citation type="journal article" date="2010" name="Appl. Environ. Microbiol.">
        <title>Conserved symbiotic plasmid DNA sequences in the multireplicon pangenomic structure of Rhizobium etli.</title>
        <authorList>
            <person name="Gonzalez V."/>
            <person name="Acosta J.L."/>
            <person name="Santamaria R.I."/>
            <person name="Bustos P."/>
            <person name="Fernandez J.L."/>
            <person name="Hernandez Gonzalez I.L."/>
            <person name="Diaz R."/>
            <person name="Flores M."/>
            <person name="Palacios R."/>
            <person name="Mora J."/>
            <person name="Davila G."/>
        </authorList>
    </citation>
    <scope>NUCLEOTIDE SEQUENCE [LARGE SCALE GENOMIC DNA]</scope>
    <source>
        <strain>CIAT 652</strain>
    </source>
</reference>
<proteinExistence type="inferred from homology"/>
<gene>
    <name evidence="1" type="primary">pheS</name>
    <name type="ordered locus">RHECIAT_CH0000299</name>
</gene>
<organism>
    <name type="scientific">Rhizobium etli (strain CIAT 652)</name>
    <dbReference type="NCBI Taxonomy" id="491916"/>
    <lineage>
        <taxon>Bacteria</taxon>
        <taxon>Pseudomonadati</taxon>
        <taxon>Pseudomonadota</taxon>
        <taxon>Alphaproteobacteria</taxon>
        <taxon>Hyphomicrobiales</taxon>
        <taxon>Rhizobiaceae</taxon>
        <taxon>Rhizobium/Agrobacterium group</taxon>
        <taxon>Rhizobium</taxon>
    </lineage>
</organism>
<comment type="catalytic activity">
    <reaction evidence="1">
        <text>tRNA(Phe) + L-phenylalanine + ATP = L-phenylalanyl-tRNA(Phe) + AMP + diphosphate + H(+)</text>
        <dbReference type="Rhea" id="RHEA:19413"/>
        <dbReference type="Rhea" id="RHEA-COMP:9668"/>
        <dbReference type="Rhea" id="RHEA-COMP:9699"/>
        <dbReference type="ChEBI" id="CHEBI:15378"/>
        <dbReference type="ChEBI" id="CHEBI:30616"/>
        <dbReference type="ChEBI" id="CHEBI:33019"/>
        <dbReference type="ChEBI" id="CHEBI:58095"/>
        <dbReference type="ChEBI" id="CHEBI:78442"/>
        <dbReference type="ChEBI" id="CHEBI:78531"/>
        <dbReference type="ChEBI" id="CHEBI:456215"/>
        <dbReference type="EC" id="6.1.1.20"/>
    </reaction>
</comment>
<comment type="cofactor">
    <cofactor evidence="1">
        <name>Mg(2+)</name>
        <dbReference type="ChEBI" id="CHEBI:18420"/>
    </cofactor>
    <text evidence="1">Binds 2 magnesium ions per tetramer.</text>
</comment>
<comment type="subunit">
    <text evidence="1">Tetramer of two alpha and two beta subunits.</text>
</comment>
<comment type="subcellular location">
    <subcellularLocation>
        <location evidence="1">Cytoplasm</location>
    </subcellularLocation>
</comment>
<comment type="similarity">
    <text evidence="1">Belongs to the class-II aminoacyl-tRNA synthetase family. Phe-tRNA synthetase alpha subunit type 1 subfamily.</text>
</comment>
<evidence type="ECO:0000255" key="1">
    <source>
        <dbReference type="HAMAP-Rule" id="MF_00281"/>
    </source>
</evidence>
<feature type="chain" id="PRO_1000114904" description="Phenylalanine--tRNA ligase alpha subunit">
    <location>
        <begin position="1"/>
        <end position="360"/>
    </location>
</feature>
<feature type="binding site" evidence="1">
    <location>
        <position position="260"/>
    </location>
    <ligand>
        <name>Mg(2+)</name>
        <dbReference type="ChEBI" id="CHEBI:18420"/>
        <note>shared with beta subunit</note>
    </ligand>
</feature>
<dbReference type="EC" id="6.1.1.20" evidence="1"/>
<dbReference type="EMBL" id="CP001074">
    <property type="protein sequence ID" value="ACE89293.1"/>
    <property type="molecule type" value="Genomic_DNA"/>
</dbReference>
<dbReference type="SMR" id="B3PYE2"/>
<dbReference type="KEGG" id="rec:RHECIAT_CH0000299"/>
<dbReference type="eggNOG" id="COG0016">
    <property type="taxonomic scope" value="Bacteria"/>
</dbReference>
<dbReference type="HOGENOM" id="CLU_025086_0_1_5"/>
<dbReference type="Proteomes" id="UP000008817">
    <property type="component" value="Chromosome"/>
</dbReference>
<dbReference type="GO" id="GO:0005737">
    <property type="term" value="C:cytoplasm"/>
    <property type="evidence" value="ECO:0007669"/>
    <property type="project" value="UniProtKB-SubCell"/>
</dbReference>
<dbReference type="GO" id="GO:0005524">
    <property type="term" value="F:ATP binding"/>
    <property type="evidence" value="ECO:0007669"/>
    <property type="project" value="UniProtKB-UniRule"/>
</dbReference>
<dbReference type="GO" id="GO:0000287">
    <property type="term" value="F:magnesium ion binding"/>
    <property type="evidence" value="ECO:0007669"/>
    <property type="project" value="UniProtKB-UniRule"/>
</dbReference>
<dbReference type="GO" id="GO:0004826">
    <property type="term" value="F:phenylalanine-tRNA ligase activity"/>
    <property type="evidence" value="ECO:0007669"/>
    <property type="project" value="UniProtKB-UniRule"/>
</dbReference>
<dbReference type="GO" id="GO:0000049">
    <property type="term" value="F:tRNA binding"/>
    <property type="evidence" value="ECO:0007669"/>
    <property type="project" value="InterPro"/>
</dbReference>
<dbReference type="GO" id="GO:0006432">
    <property type="term" value="P:phenylalanyl-tRNA aminoacylation"/>
    <property type="evidence" value="ECO:0007669"/>
    <property type="project" value="UniProtKB-UniRule"/>
</dbReference>
<dbReference type="CDD" id="cd00496">
    <property type="entry name" value="PheRS_alpha_core"/>
    <property type="match status" value="1"/>
</dbReference>
<dbReference type="FunFam" id="3.30.930.10:FF:000003">
    <property type="entry name" value="Phenylalanine--tRNA ligase alpha subunit"/>
    <property type="match status" value="1"/>
</dbReference>
<dbReference type="Gene3D" id="3.30.930.10">
    <property type="entry name" value="Bira Bifunctional Protein, Domain 2"/>
    <property type="match status" value="1"/>
</dbReference>
<dbReference type="HAMAP" id="MF_00281">
    <property type="entry name" value="Phe_tRNA_synth_alpha1"/>
    <property type="match status" value="1"/>
</dbReference>
<dbReference type="InterPro" id="IPR006195">
    <property type="entry name" value="aa-tRNA-synth_II"/>
</dbReference>
<dbReference type="InterPro" id="IPR045864">
    <property type="entry name" value="aa-tRNA-synth_II/BPL/LPL"/>
</dbReference>
<dbReference type="InterPro" id="IPR004529">
    <property type="entry name" value="Phe-tRNA-synth_IIc_asu"/>
</dbReference>
<dbReference type="InterPro" id="IPR004188">
    <property type="entry name" value="Phe-tRNA_ligase_II_N"/>
</dbReference>
<dbReference type="InterPro" id="IPR022911">
    <property type="entry name" value="Phe_tRNA_ligase_alpha1_bac"/>
</dbReference>
<dbReference type="InterPro" id="IPR002319">
    <property type="entry name" value="Phenylalanyl-tRNA_Synthase"/>
</dbReference>
<dbReference type="InterPro" id="IPR010978">
    <property type="entry name" value="tRNA-bd_arm"/>
</dbReference>
<dbReference type="NCBIfam" id="TIGR00468">
    <property type="entry name" value="pheS"/>
    <property type="match status" value="1"/>
</dbReference>
<dbReference type="PANTHER" id="PTHR11538:SF41">
    <property type="entry name" value="PHENYLALANINE--TRNA LIGASE, MITOCHONDRIAL"/>
    <property type="match status" value="1"/>
</dbReference>
<dbReference type="PANTHER" id="PTHR11538">
    <property type="entry name" value="PHENYLALANYL-TRNA SYNTHETASE"/>
    <property type="match status" value="1"/>
</dbReference>
<dbReference type="Pfam" id="PF02912">
    <property type="entry name" value="Phe_tRNA-synt_N"/>
    <property type="match status" value="1"/>
</dbReference>
<dbReference type="Pfam" id="PF01409">
    <property type="entry name" value="tRNA-synt_2d"/>
    <property type="match status" value="1"/>
</dbReference>
<dbReference type="SUPFAM" id="SSF55681">
    <property type="entry name" value="Class II aaRS and biotin synthetases"/>
    <property type="match status" value="1"/>
</dbReference>
<dbReference type="SUPFAM" id="SSF46589">
    <property type="entry name" value="tRNA-binding arm"/>
    <property type="match status" value="1"/>
</dbReference>
<dbReference type="PROSITE" id="PS50862">
    <property type="entry name" value="AA_TRNA_LIGASE_II"/>
    <property type="match status" value="1"/>
</dbReference>
<sequence length="360" mass="40214">MSDIDQLNSSLLAEIAATNDEPALEAVRVAALGKKGSISELLKTLGAMTPEERQTRGAAINALKNAVTDAIAERKSVLKMAAVNARLKAETVDVSLPVRSSPAERGRIHPISQIVDEITAIFADMGFSIAEGPDIETDYYNFTALNFPEGHPAREMHDTFFFNPDENGERKVLRTHTSPVQVRTMEAQKPPIRIIIPGKTYRQDSDATHSPMFHQVEGLVIDKKANVANIRWVLEEFCKTFFEVDSVTMRFRPSFFPFTEPSFEVDIQCDRSGPIVKFGEGTDWMEILGCGMVHPNVLRYGGLDPDEYQGFAWGMGLDRIAMLKYGMPDLRDFFNADVRWMTHYGFRPLDMPTLFGGLSA</sequence>